<sequence length="912" mass="103907">MESLKTDTEMPYPEVIVDVGRVIFGEENRKKMTNSCLKRSENSRIIRAICALLNSGGGVIKAEIDDKTYSYQCHGLGQDLETSFQKLLPSGSQKYLDYMQQGHNLLIFVKSWSPDVFSLPLRICSLRSNLYRRDVTSAINLSASSALELLREKGFRAQRGRPRVKKLHPQQVLNRCIQEEEDMRILASEFFKKDKLMYKEKLNFTESTHVEFKRFTTKKVIPRIKEMLPHYVSAFANTQGGYVLIGVDDKSKEVVGCKWEKVNPDLLKKEIENCIEKLPTFHFCCEKPKVNFTTKILNVYQKDVLDGYVCVIQVEPFCCVVFAEAPDSWIMKDNSVTRLTAEQWVVMMLDTQSAPPSLVTDYNSCLISSASSARKSPGYPIKVHKFKEALQRHLFPVTQEEVQFKPESLCKKLFSDHKELEGLMKTLIHPCSQGIVIFSRSWAGDVGFRKEQNVLCDALLIAVNSPVVLYTILIDPNWPGGLEYARNTAHQLKQKLQTVGGYTGKVCIIPRLIHLSSTQSRPGEIPLRYPRSYRLADEEEMEDLLQALVVVSLSSRSLLSDQMGCEFFNLLIMEQSQLLSESLQKTRELFIYCFPGVRKTALAIKIMEKIKDLFHCKPKEILYVCESDSLKDFVTQQTTCQAVTRKTFMQGEFLKIKHIVMDETENFCSKYGNWYMKAKNITHPKAKGTGSENLHHGILWLFLDPFQIHHADVNGLPPPSAQFPRKTITSGIHCALEIAKVMKEEMKRIKENPPSNMSPDTLALFSETAYEEATCAQALPGVCETKTNLTTEQIANYVARKCHSLFQCGYLPKDIAILCRRGEDRGRYRLALLKAMELIETHRPSEVVFSPATGVWGSHIVLDSIQQFSGLERTVVFGLSPECDQSEEFHKLCFASRAIKHLYLLYEKRAAY</sequence>
<protein>
    <recommendedName>
        <fullName evidence="8">Protein SLFN14</fullName>
    </recommendedName>
    <component>
        <recommendedName>
            <fullName evidence="8">C-terminally truncated SLFN14 endoribonuclease</fullName>
            <ecNumber evidence="1">3.1.-.-</ecNumber>
        </recommendedName>
        <alternativeName>
            <fullName evidence="10">Schlafen family member 14</fullName>
        </alternativeName>
    </component>
</protein>
<gene>
    <name evidence="10" type="primary">SLFN14</name>
</gene>
<organism>
    <name type="scientific">Homo sapiens</name>
    <name type="common">Human</name>
    <dbReference type="NCBI Taxonomy" id="9606"/>
    <lineage>
        <taxon>Eukaryota</taxon>
        <taxon>Metazoa</taxon>
        <taxon>Chordata</taxon>
        <taxon>Craniata</taxon>
        <taxon>Vertebrata</taxon>
        <taxon>Euteleostomi</taxon>
        <taxon>Mammalia</taxon>
        <taxon>Eutheria</taxon>
        <taxon>Euarchontoglires</taxon>
        <taxon>Primates</taxon>
        <taxon>Haplorrhini</taxon>
        <taxon>Catarrhini</taxon>
        <taxon>Hominidae</taxon>
        <taxon>Homo</taxon>
    </lineage>
</organism>
<comment type="function">
    <molecule>Protein SLFN14</molecule>
    <text evidence="5">Shows no ribosome-associated and endoribonuclease activities.</text>
</comment>
<comment type="function">
    <molecule>C-terminally truncated SLFN14 endoribonuclease</molecule>
    <text evidence="1 5 7 9">Displays polysome-associated endoribonuclease activity towards mRNAs and rRNAs (PubMed:25996083). May play a role in RNA surveillance pathways by recognizing stalled ribosomes and triggering endonucleolytic cleavage of aberrant mRNAs (Probable). Cleaves different types of rRNAs and mRNAs in a magnesium- and manganese-dependent and ATP-independent manner (By similarity). Involved in correct maturation of megakaryocytes and especially important for proplatelet extension.</text>
</comment>
<comment type="cofactor">
    <cofactor evidence="1">
        <name>Mg(2+)</name>
        <dbReference type="ChEBI" id="CHEBI:18420"/>
    </cofactor>
    <cofactor evidence="1">
        <name>Mn(2+)</name>
        <dbReference type="ChEBI" id="CHEBI:29035"/>
    </cofactor>
    <text evidence="1">C-terminally truncated SLFN14 endoribonuclease requires manganese and magnesium for its endoribonuclease activity.</text>
</comment>
<comment type="subunit">
    <molecule>C-terminally truncated SLFN14 endoribonuclease</molecule>
    <text evidence="5">Associates with ribosomes in an ATP-independent manner (PubMed:25996083).</text>
</comment>
<comment type="subcellular location">
    <molecule>Protein SLFN14</molecule>
    <subcellularLocation>
        <location evidence="5 6">Nucleus</location>
    </subcellularLocation>
</comment>
<comment type="alternative products">
    <event type="alternative splicing"/>
    <isoform>
        <id>P0C7P3-1</id>
        <name>1</name>
        <sequence type="displayed"/>
    </isoform>
    <isoform>
        <id>P0C7P3-2</id>
        <name>2</name>
        <sequence type="described" ref="VSP_034414"/>
    </isoform>
</comment>
<comment type="tissue specificity">
    <text evidence="4 6">Expressed in megakaryocytes and platelets (at protein level) (PubMed:26280575). Weakly expressed in melanocytes and malignant melanoma cells (PubMed:20956525).</text>
</comment>
<comment type="disease" evidence="6 7">
    <disease id="DI-04706">
        <name>Bleeding disorder, platelet-type, 20</name>
        <acronym>BDPLT20</acronym>
        <description>A disorder characterized by increased bleeding tendency due to platelet dysfunction. Clinical features include epistaxis, hematomas, bleeding after tooth extraction, and menorrhagia. BDPLT20 is characterized by moderate thrombocytopenia and platelet secretion defects. Inheritance is autosomal dominant.</description>
        <dbReference type="MIM" id="616913"/>
    </disease>
    <text>The disease is caused by variants affecting the gene represented in this entry.</text>
</comment>
<comment type="similarity">
    <text evidence="8">Belongs to the Schlafen family. Subgroup III subfamily.</text>
</comment>
<keyword id="KW-0025">Alternative splicing</keyword>
<keyword id="KW-0067">ATP-binding</keyword>
<keyword id="KW-0225">Disease variant</keyword>
<keyword id="KW-0255">Endonuclease</keyword>
<keyword id="KW-0378">Hydrolase</keyword>
<keyword id="KW-0540">Nuclease</keyword>
<keyword id="KW-0547">Nucleotide-binding</keyword>
<keyword id="KW-0539">Nucleus</keyword>
<keyword id="KW-1267">Proteomics identification</keyword>
<keyword id="KW-1185">Reference proteome</keyword>
<feature type="chain" id="PRO_0000342339" description="Protein SLFN14">
    <location>
        <begin position="1"/>
        <end position="912"/>
    </location>
</feature>
<feature type="chain" id="PRO_0000436153" description="C-terminally truncated SLFN14 endoribonuclease">
    <location>
        <begin position="1"/>
        <end status="unknown"/>
    </location>
</feature>
<feature type="region of interest" description="Required for endoribonuclease activity" evidence="5">
    <location>
        <begin position="206"/>
        <end position="391"/>
    </location>
</feature>
<feature type="region of interest" description="Required for ribosome binding" evidence="5">
    <location>
        <begin position="392"/>
        <end position="571"/>
    </location>
</feature>
<feature type="binding site" evidence="2">
    <location>
        <begin position="593"/>
        <end position="600"/>
    </location>
    <ligand>
        <name>ATP</name>
        <dbReference type="ChEBI" id="CHEBI:30616"/>
    </ligand>
</feature>
<feature type="splice variant" id="VSP_034414" description="In isoform 2." evidence="8">
    <location>
        <begin position="353"/>
        <end position="368"/>
    </location>
</feature>
<feature type="sequence variant" id="VAR_044177" description="In dbSNP:rs10512472.">
    <original>Q</original>
    <variation>R</variation>
    <location>
        <position position="93"/>
    </location>
</feature>
<feature type="sequence variant" id="VAR_075786" description="In BDPLT20; the mutation results in strongly reduced protein stability; dbSNP:rs869320716." evidence="6">
    <original>K</original>
    <variation>E</variation>
    <location>
        <position position="218"/>
    </location>
</feature>
<feature type="sequence variant" id="VAR_075787" description="In BDPLT20; the mutation results in strongly reduced protein stability; dbSNP:rs869320715." evidence="6">
    <original>K</original>
    <variation>N</variation>
    <location>
        <position position="219"/>
    </location>
</feature>
<feature type="sequence variant" id="VAR_075788" description="In BDPLT20; the mutation results in weakly reduced protein stability; dbSNP:rs869320714." evidence="6">
    <original>V</original>
    <variation>D</variation>
    <location>
        <position position="220"/>
    </location>
</feature>
<feature type="sequence variant" id="VAR_076796" description="In BDPLT20; dbSNP:rs757188030." evidence="7">
    <original>R</original>
    <variation>W</variation>
    <location>
        <position position="223"/>
    </location>
</feature>
<feature type="sequence variant" id="VAR_044178" description="In dbSNP:rs321612." evidence="3">
    <original>K</original>
    <variation>E</variation>
    <location>
        <position position="385"/>
    </location>
</feature>
<feature type="sequence variant" id="VAR_044179" description="In dbSNP:rs1350011.">
    <original>G</original>
    <variation>S</variation>
    <location>
        <position position="870"/>
    </location>
</feature>
<feature type="sequence variant" id="VAR_044180" description="In dbSNP:rs1350010.">
    <original>S</original>
    <variation>I</variation>
    <location>
        <position position="880"/>
    </location>
</feature>
<feature type="sequence variant" id="VAR_044181" description="In dbSNP:rs9907259.">
    <original>L</original>
    <variation>F</variation>
    <location>
        <position position="905"/>
    </location>
</feature>
<feature type="sequence variant" id="VAR_044182" description="In dbSNP:rs8073060.">
    <original>Y</original>
    <variation>F</variation>
    <location>
        <position position="912"/>
    </location>
</feature>
<feature type="mutagenesis site" description="Reduces endoribonuclease activity." evidence="5">
    <original>D</original>
    <variation>A</variation>
    <location>
        <position position="248"/>
    </location>
</feature>
<feature type="mutagenesis site" description="Abolishes endoribonuclease activity." evidence="5">
    <original>D</original>
    <variation>A</variation>
    <location>
        <position position="249"/>
    </location>
</feature>
<feature type="sequence conflict" description="In Ref. 2; AAI40848/AAI57878/AAI57880." evidence="8" ref="2">
    <original>P</original>
    <variation>S</variation>
    <location>
        <position position="356"/>
    </location>
</feature>
<name>SLN14_HUMAN</name>
<accession>P0C7P3</accession>
<accession>B2RTW9</accession>
<dbReference type="EC" id="3.1.-.-" evidence="1"/>
<dbReference type="EMBL" id="AC015911">
    <property type="status" value="NOT_ANNOTATED_CDS"/>
    <property type="molecule type" value="Genomic_DNA"/>
</dbReference>
<dbReference type="EMBL" id="BC140847">
    <property type="protein sequence ID" value="AAI40848.1"/>
    <property type="molecule type" value="mRNA"/>
</dbReference>
<dbReference type="EMBL" id="BC157877">
    <property type="protein sequence ID" value="AAI57878.1"/>
    <property type="molecule type" value="mRNA"/>
</dbReference>
<dbReference type="EMBL" id="BC157879">
    <property type="protein sequence ID" value="AAI57880.1"/>
    <property type="molecule type" value="mRNA"/>
</dbReference>
<dbReference type="CCDS" id="CCDS45650.1">
    <molecule id="P0C7P3-1"/>
</dbReference>
<dbReference type="RefSeq" id="NP_001123292.1">
    <molecule id="P0C7P3-1"/>
    <property type="nucleotide sequence ID" value="NM_001129820.2"/>
</dbReference>
<dbReference type="RefSeq" id="XP_016880065.1">
    <property type="nucleotide sequence ID" value="XM_017024576.1"/>
</dbReference>
<dbReference type="RefSeq" id="XP_016880066.1">
    <molecule id="P0C7P3-1"/>
    <property type="nucleotide sequence ID" value="XM_017024577.2"/>
</dbReference>
<dbReference type="RefSeq" id="XP_016880067.1">
    <molecule id="P0C7P3-1"/>
    <property type="nucleotide sequence ID" value="XM_017024578.2"/>
</dbReference>
<dbReference type="RefSeq" id="XP_016880068.1">
    <molecule id="P0C7P3-1"/>
    <property type="nucleotide sequence ID" value="XM_017024579.2"/>
</dbReference>
<dbReference type="SMR" id="P0C7P3"/>
<dbReference type="BioGRID" id="131189">
    <property type="interactions" value="2"/>
</dbReference>
<dbReference type="FunCoup" id="P0C7P3">
    <property type="interactions" value="19"/>
</dbReference>
<dbReference type="IntAct" id="P0C7P3">
    <property type="interactions" value="1"/>
</dbReference>
<dbReference type="iPTMnet" id="P0C7P3"/>
<dbReference type="PhosphoSitePlus" id="P0C7P3"/>
<dbReference type="BioMuta" id="SLFN14"/>
<dbReference type="DMDM" id="288558826"/>
<dbReference type="jPOST" id="P0C7P3"/>
<dbReference type="MassIVE" id="P0C7P3"/>
<dbReference type="PaxDb" id="9606-ENSP00000391101"/>
<dbReference type="PeptideAtlas" id="P0C7P3"/>
<dbReference type="ProteomicsDB" id="52355">
    <molecule id="P0C7P3-1"/>
</dbReference>
<dbReference type="ProteomicsDB" id="52356">
    <molecule id="P0C7P3-2"/>
</dbReference>
<dbReference type="Antibodypedia" id="43976">
    <property type="antibodies" value="67 antibodies from 17 providers"/>
</dbReference>
<dbReference type="DNASU" id="342618"/>
<dbReference type="Ensembl" id="ENST00000415846.3">
    <molecule id="P0C7P3-1"/>
    <property type="protein sequence ID" value="ENSP00000391101.2"/>
    <property type="gene ID" value="ENSG00000236320.4"/>
</dbReference>
<dbReference type="Ensembl" id="ENST00000674182.1">
    <molecule id="P0C7P3-1"/>
    <property type="protein sequence ID" value="ENSP00000501524.1"/>
    <property type="gene ID" value="ENSG00000236320.4"/>
</dbReference>
<dbReference type="GeneID" id="342618"/>
<dbReference type="KEGG" id="hsa:342618"/>
<dbReference type="MANE-Select" id="ENST00000674182.1">
    <property type="protein sequence ID" value="ENSP00000501524.1"/>
    <property type="RefSeq nucleotide sequence ID" value="NM_001129820.2"/>
    <property type="RefSeq protein sequence ID" value="NP_001123292.1"/>
</dbReference>
<dbReference type="UCSC" id="uc010ctu.2">
    <molecule id="P0C7P3-1"/>
    <property type="organism name" value="human"/>
</dbReference>
<dbReference type="AGR" id="HGNC:32689"/>
<dbReference type="CTD" id="342618"/>
<dbReference type="DisGeNET" id="342618"/>
<dbReference type="GeneCards" id="SLFN14"/>
<dbReference type="HGNC" id="HGNC:32689">
    <property type="gene designation" value="SLFN14"/>
</dbReference>
<dbReference type="HPA" id="ENSG00000236320">
    <property type="expression patterns" value="Tissue enriched (bone)"/>
</dbReference>
<dbReference type="MalaCards" id="SLFN14"/>
<dbReference type="MIM" id="614958">
    <property type="type" value="gene"/>
</dbReference>
<dbReference type="MIM" id="616913">
    <property type="type" value="phenotype"/>
</dbReference>
<dbReference type="neXtProt" id="NX_P0C7P3"/>
<dbReference type="OpenTargets" id="ENSG00000236320"/>
<dbReference type="Orphanet" id="466806">
    <property type="disease" value="Autosomal dominant thrombocytopenia with platelet secretion defect"/>
</dbReference>
<dbReference type="PharmGKB" id="PA144596361"/>
<dbReference type="VEuPathDB" id="HostDB:ENSG00000236320"/>
<dbReference type="eggNOG" id="ENOG502QWKG">
    <property type="taxonomic scope" value="Eukaryota"/>
</dbReference>
<dbReference type="GeneTree" id="ENSGT00410000025651"/>
<dbReference type="HOGENOM" id="CLU_007071_0_0_1"/>
<dbReference type="InParanoid" id="P0C7P3"/>
<dbReference type="OMA" id="LHHGVLW"/>
<dbReference type="OrthoDB" id="6052143at2759"/>
<dbReference type="PAN-GO" id="P0C7P3">
    <property type="GO annotations" value="4 GO annotations based on evolutionary models"/>
</dbReference>
<dbReference type="PhylomeDB" id="P0C7P3"/>
<dbReference type="TreeFam" id="TF337168"/>
<dbReference type="PathwayCommons" id="P0C7P3"/>
<dbReference type="SignaLink" id="P0C7P3"/>
<dbReference type="BioGRID-ORCS" id="342618">
    <property type="hits" value="5 hits in 1148 CRISPR screens"/>
</dbReference>
<dbReference type="GenomeRNAi" id="342618"/>
<dbReference type="Pharos" id="P0C7P3">
    <property type="development level" value="Tbio"/>
</dbReference>
<dbReference type="PRO" id="PR:P0C7P3"/>
<dbReference type="Proteomes" id="UP000005640">
    <property type="component" value="Chromosome 17"/>
</dbReference>
<dbReference type="RNAct" id="P0C7P3">
    <property type="molecule type" value="protein"/>
</dbReference>
<dbReference type="Bgee" id="ENSG00000236320">
    <property type="expression patterns" value="Expressed in monocyte and 26 other cell types or tissues"/>
</dbReference>
<dbReference type="GO" id="GO:0005737">
    <property type="term" value="C:cytoplasm"/>
    <property type="evidence" value="ECO:0000314"/>
    <property type="project" value="UniProtKB"/>
</dbReference>
<dbReference type="GO" id="GO:0005634">
    <property type="term" value="C:nucleus"/>
    <property type="evidence" value="ECO:0000314"/>
    <property type="project" value="UniProtKB"/>
</dbReference>
<dbReference type="GO" id="GO:0005524">
    <property type="term" value="F:ATP binding"/>
    <property type="evidence" value="ECO:0007669"/>
    <property type="project" value="UniProtKB-KW"/>
</dbReference>
<dbReference type="GO" id="GO:0043022">
    <property type="term" value="F:ribosome binding"/>
    <property type="evidence" value="ECO:0000314"/>
    <property type="project" value="UniProtKB"/>
</dbReference>
<dbReference type="GO" id="GO:0004521">
    <property type="term" value="F:RNA endonuclease activity"/>
    <property type="evidence" value="ECO:0000314"/>
    <property type="project" value="UniProtKB"/>
</dbReference>
<dbReference type="GO" id="GO:0071286">
    <property type="term" value="P:cellular response to magnesium ion"/>
    <property type="evidence" value="ECO:0000250"/>
    <property type="project" value="UniProtKB"/>
</dbReference>
<dbReference type="GO" id="GO:0071287">
    <property type="term" value="P:cellular response to manganese ion"/>
    <property type="evidence" value="ECO:0000250"/>
    <property type="project" value="UniProtKB"/>
</dbReference>
<dbReference type="GO" id="GO:0006402">
    <property type="term" value="P:mRNA catabolic process"/>
    <property type="evidence" value="ECO:0000314"/>
    <property type="project" value="UniProtKB"/>
</dbReference>
<dbReference type="GO" id="GO:0036345">
    <property type="term" value="P:platelet maturation"/>
    <property type="evidence" value="ECO:0000315"/>
    <property type="project" value="UniProtKB"/>
</dbReference>
<dbReference type="GO" id="GO:0016075">
    <property type="term" value="P:rRNA catabolic process"/>
    <property type="evidence" value="ECO:0000314"/>
    <property type="project" value="UniProtKB"/>
</dbReference>
<dbReference type="FunFam" id="3.30.950.30:FF:000001">
    <property type="entry name" value="Schlafen family member 14"/>
    <property type="match status" value="1"/>
</dbReference>
<dbReference type="Gene3D" id="3.30.950.30">
    <property type="entry name" value="Schlafen, AAA domain"/>
    <property type="match status" value="1"/>
</dbReference>
<dbReference type="InterPro" id="IPR027417">
    <property type="entry name" value="P-loop_NTPase"/>
</dbReference>
<dbReference type="InterPro" id="IPR031450">
    <property type="entry name" value="Poxin-SLFN/SLFN_N"/>
</dbReference>
<dbReference type="InterPro" id="IPR029684">
    <property type="entry name" value="Schlafen"/>
</dbReference>
<dbReference type="InterPro" id="IPR007421">
    <property type="entry name" value="Schlafen_AlbA_2_dom"/>
</dbReference>
<dbReference type="InterPro" id="IPR038461">
    <property type="entry name" value="Schlafen_AlbA_2_dom_sf"/>
</dbReference>
<dbReference type="InterPro" id="IPR048729">
    <property type="entry name" value="SLFN_GTPase-like"/>
</dbReference>
<dbReference type="PANTHER" id="PTHR12155:SF30">
    <property type="entry name" value="PROTEIN SLFN14"/>
    <property type="match status" value="1"/>
</dbReference>
<dbReference type="PANTHER" id="PTHR12155">
    <property type="entry name" value="SCHLAFEN"/>
    <property type="match status" value="1"/>
</dbReference>
<dbReference type="Pfam" id="PF17057">
    <property type="entry name" value="B3R"/>
    <property type="match status" value="1"/>
</dbReference>
<dbReference type="Pfam" id="PF04326">
    <property type="entry name" value="SLFN_AlbA_2"/>
    <property type="match status" value="1"/>
</dbReference>
<dbReference type="Pfam" id="PF21026">
    <property type="entry name" value="SLFN_GTPase-like"/>
    <property type="match status" value="1"/>
</dbReference>
<dbReference type="SUPFAM" id="SSF52540">
    <property type="entry name" value="P-loop containing nucleoside triphosphate hydrolases"/>
    <property type="match status" value="1"/>
</dbReference>
<evidence type="ECO:0000250" key="1">
    <source>
        <dbReference type="UniProtKB" id="G1SRW8"/>
    </source>
</evidence>
<evidence type="ECO:0000255" key="2"/>
<evidence type="ECO:0000269" key="3">
    <source>
    </source>
</evidence>
<evidence type="ECO:0000269" key="4">
    <source>
    </source>
</evidence>
<evidence type="ECO:0000269" key="5">
    <source>
    </source>
</evidence>
<evidence type="ECO:0000269" key="6">
    <source>
    </source>
</evidence>
<evidence type="ECO:0000269" key="7">
    <source>
    </source>
</evidence>
<evidence type="ECO:0000305" key="8"/>
<evidence type="ECO:0000305" key="9">
    <source>
    </source>
</evidence>
<evidence type="ECO:0000312" key="10">
    <source>
        <dbReference type="HGNC" id="HGNC:32689"/>
    </source>
</evidence>
<proteinExistence type="evidence at protein level"/>
<reference key="1">
    <citation type="journal article" date="2006" name="Nature">
        <title>DNA sequence of human chromosome 17 and analysis of rearrangement in the human lineage.</title>
        <authorList>
            <person name="Zody M.C."/>
            <person name="Garber M."/>
            <person name="Adams D.J."/>
            <person name="Sharpe T."/>
            <person name="Harrow J."/>
            <person name="Lupski J.R."/>
            <person name="Nicholson C."/>
            <person name="Searle S.M."/>
            <person name="Wilming L."/>
            <person name="Young S.K."/>
            <person name="Abouelleil A."/>
            <person name="Allen N.R."/>
            <person name="Bi W."/>
            <person name="Bloom T."/>
            <person name="Borowsky M.L."/>
            <person name="Bugalter B.E."/>
            <person name="Butler J."/>
            <person name="Chang J.L."/>
            <person name="Chen C.-K."/>
            <person name="Cook A."/>
            <person name="Corum B."/>
            <person name="Cuomo C.A."/>
            <person name="de Jong P.J."/>
            <person name="DeCaprio D."/>
            <person name="Dewar K."/>
            <person name="FitzGerald M."/>
            <person name="Gilbert J."/>
            <person name="Gibson R."/>
            <person name="Gnerre S."/>
            <person name="Goldstein S."/>
            <person name="Grafham D.V."/>
            <person name="Grocock R."/>
            <person name="Hafez N."/>
            <person name="Hagopian D.S."/>
            <person name="Hart E."/>
            <person name="Norman C.H."/>
            <person name="Humphray S."/>
            <person name="Jaffe D.B."/>
            <person name="Jones M."/>
            <person name="Kamal M."/>
            <person name="Khodiyar V.K."/>
            <person name="LaButti K."/>
            <person name="Laird G."/>
            <person name="Lehoczky J."/>
            <person name="Liu X."/>
            <person name="Lokyitsang T."/>
            <person name="Loveland J."/>
            <person name="Lui A."/>
            <person name="Macdonald P."/>
            <person name="Major J.E."/>
            <person name="Matthews L."/>
            <person name="Mauceli E."/>
            <person name="McCarroll S.A."/>
            <person name="Mihalev A.H."/>
            <person name="Mudge J."/>
            <person name="Nguyen C."/>
            <person name="Nicol R."/>
            <person name="O'Leary S.B."/>
            <person name="Osoegawa K."/>
            <person name="Schwartz D.C."/>
            <person name="Shaw-Smith C."/>
            <person name="Stankiewicz P."/>
            <person name="Steward C."/>
            <person name="Swarbreck D."/>
            <person name="Venkataraman V."/>
            <person name="Whittaker C.A."/>
            <person name="Yang X."/>
            <person name="Zimmer A.R."/>
            <person name="Bradley A."/>
            <person name="Hubbard T."/>
            <person name="Birren B.W."/>
            <person name="Rogers J."/>
            <person name="Lander E.S."/>
            <person name="Nusbaum C."/>
        </authorList>
    </citation>
    <scope>NUCLEOTIDE SEQUENCE [LARGE SCALE GENOMIC DNA]</scope>
</reference>
<reference key="2">
    <citation type="journal article" date="2004" name="Genome Res.">
        <title>The status, quality, and expansion of the NIH full-length cDNA project: the Mammalian Gene Collection (MGC).</title>
        <authorList>
            <consortium name="The MGC Project Team"/>
        </authorList>
    </citation>
    <scope>NUCLEOTIDE SEQUENCE [LARGE SCALE MRNA] (ISOFORM 1)</scope>
    <scope>VARIANT GLU-385</scope>
</reference>
<reference key="3">
    <citation type="journal article" date="2010" name="J. Biol. Chem.">
        <title>Role of interferon {alpha} (IFN{alpha})-inducible Schlafen-5 in regulation of anchorage-independent growth and invasion of malignant melanoma cells.</title>
        <authorList>
            <person name="Katsoulidis E."/>
            <person name="Mavrommatis E."/>
            <person name="Woodard J."/>
            <person name="Shields M.A."/>
            <person name="Sassano A."/>
            <person name="Carayol N."/>
            <person name="Sawicki K.T."/>
            <person name="Munshi H.G."/>
            <person name="Platanias L.C."/>
        </authorList>
    </citation>
    <scope>TISSUE SPECIFICITY</scope>
</reference>
<reference key="4">
    <citation type="journal article" date="2015" name="Biochemistry">
        <title>Characterization of novel ribosome-associated endoribonuclease SLFN14 from rabbit reticulocytes.</title>
        <authorList>
            <person name="Pisareva V.P."/>
            <person name="Muslimov I.A."/>
            <person name="Tcherepanov A."/>
            <person name="Pisarev A.V."/>
        </authorList>
    </citation>
    <scope>FUNCTION</scope>
    <scope>SUBCELLULAR LOCATION</scope>
    <scope>ASSOCIATION WITH RIBOSOMES</scope>
    <scope>MUTAGENESIS OF ASP-248 AND ASP-249</scope>
</reference>
<reference key="5">
    <citation type="journal article" date="2015" name="J. Clin. Invest.">
        <title>SLFN14 mutations underlie thrombocytopenia with excessive bleeding and platelet secretion defects.</title>
        <authorList>
            <consortium name="UK Genotyping and Phenotyping of Platelets study group"/>
            <person name="Fletcher S.J."/>
            <person name="Johnson B."/>
            <person name="Lowe G.C."/>
            <person name="Bem D."/>
            <person name="Drake S."/>
            <person name="Lordkipanidze M."/>
            <person name="Guiu I.S."/>
            <person name="Dawood B."/>
            <person name="Rivera J."/>
            <person name="Simpson M.A."/>
            <person name="Daly M.E."/>
            <person name="Motwani J."/>
            <person name="Collins P.W."/>
            <person name="Watson S.P."/>
            <person name="Morgan N.V."/>
        </authorList>
    </citation>
    <scope>INVOLVEMENT IN BDPLT20</scope>
    <scope>VARIANTS BDPLT20 GLU-218; ASN-219 AND ASP-220</scope>
    <scope>CHARACTERIZATION OF VARIANTS BDPLT20 GLU-218; ASN-219 AND ASP-220</scope>
    <scope>SUBCELLULAR LOCATION</scope>
    <scope>TISSUE SPECIFICITY</scope>
</reference>
<reference key="6">
    <citation type="journal article" date="2016" name="Thromb. Haemost.">
        <title>SLFN14-related thrombocytopenia: identification within a large series of patients with inherited thrombocytopenia.</title>
        <authorList>
            <person name="Marconi C."/>
            <person name="Di Buduo C.A."/>
            <person name="Barozzi S."/>
            <person name="Palombo F."/>
            <person name="Pardini S."/>
            <person name="Zaninetti C."/>
            <person name="Pippucci T."/>
            <person name="Noris P."/>
            <person name="Balduini A."/>
            <person name="Seri M."/>
            <person name="Pecci A."/>
        </authorList>
    </citation>
    <scope>FUNCTION</scope>
    <scope>VARIANT BDPLT20 TRP-223</scope>
</reference>